<keyword id="KW-0010">Activator</keyword>
<keyword id="KW-1017">Isopeptide bond</keyword>
<keyword id="KW-0479">Metal-binding</keyword>
<keyword id="KW-0539">Nucleus</keyword>
<keyword id="KW-1185">Reference proteome</keyword>
<keyword id="KW-0677">Repeat</keyword>
<keyword id="KW-0678">Repressor</keyword>
<keyword id="KW-0804">Transcription</keyword>
<keyword id="KW-0805">Transcription regulation</keyword>
<keyword id="KW-0832">Ubl conjugation</keyword>
<keyword id="KW-0862">Zinc</keyword>
<keyword id="KW-0863">Zinc-finger</keyword>
<feature type="chain" id="PRO_0000316977" description="RB-associated KRAB zinc finger protein">
    <location>
        <begin position="1"/>
        <end position="711"/>
    </location>
</feature>
<feature type="domain" description="KRAB" evidence="4">
    <location>
        <begin position="8"/>
        <end position="79"/>
    </location>
</feature>
<feature type="zinc finger region" description="C2H2-type 1" evidence="3">
    <location>
        <begin position="258"/>
        <end position="280"/>
    </location>
</feature>
<feature type="zinc finger region" description="C2H2-type 2" evidence="3">
    <location>
        <begin position="286"/>
        <end position="308"/>
    </location>
</feature>
<feature type="zinc finger region" description="C2H2-type 3" evidence="3">
    <location>
        <begin position="314"/>
        <end position="336"/>
    </location>
</feature>
<feature type="zinc finger region" description="C2H2-type 4" evidence="3">
    <location>
        <begin position="342"/>
        <end position="364"/>
    </location>
</feature>
<feature type="zinc finger region" description="C2H2-type 5" evidence="3">
    <location>
        <begin position="370"/>
        <end position="392"/>
    </location>
</feature>
<feature type="zinc finger region" description="C2H2-type 6" evidence="3">
    <location>
        <begin position="398"/>
        <end position="420"/>
    </location>
</feature>
<feature type="zinc finger region" description="C2H2-type 7" evidence="3">
    <location>
        <begin position="426"/>
        <end position="448"/>
    </location>
</feature>
<feature type="zinc finger region" description="C2H2-type 8" evidence="3">
    <location>
        <begin position="454"/>
        <end position="476"/>
    </location>
</feature>
<feature type="zinc finger region" description="C2H2-type 9; degenerate" evidence="3">
    <location>
        <begin position="508"/>
        <end position="530"/>
    </location>
</feature>
<feature type="zinc finger region" description="C2H2-type 10" evidence="3">
    <location>
        <begin position="536"/>
        <end position="558"/>
    </location>
</feature>
<feature type="zinc finger region" description="C2H2-type 11" evidence="3">
    <location>
        <begin position="564"/>
        <end position="586"/>
    </location>
</feature>
<feature type="zinc finger region" description="C2H2-type 12" evidence="3">
    <location>
        <begin position="592"/>
        <end position="614"/>
    </location>
</feature>
<feature type="zinc finger region" description="C2H2-type 13" evidence="3">
    <location>
        <begin position="620"/>
        <end position="642"/>
    </location>
</feature>
<feature type="zinc finger region" description="C2H2-type 14" evidence="3">
    <location>
        <begin position="648"/>
        <end position="670"/>
    </location>
</feature>
<feature type="zinc finger region" description="C2H2-type 15" evidence="3">
    <location>
        <begin position="676"/>
        <end position="698"/>
    </location>
</feature>
<feature type="region of interest" description="Required for interaction with RB1" evidence="1">
    <location>
        <begin position="170"/>
        <end position="257"/>
    </location>
</feature>
<feature type="region of interest" description="Interaction with AR" evidence="1">
    <location>
        <begin position="414"/>
        <end position="711"/>
    </location>
</feature>
<feature type="cross-link" description="Glycyl lysine isopeptide (Lys-Gly) (interchain with G-Cter in SUMO2)" evidence="2">
    <location>
        <position position="97"/>
    </location>
</feature>
<feature type="cross-link" description="Glycyl lysine isopeptide (Lys-Gly) (interchain with G-Cter in SUMO2)" evidence="2">
    <location>
        <position position="256"/>
    </location>
</feature>
<feature type="cross-link" description="Glycyl lysine isopeptide (Lys-Gly) (interchain with G-Cter in SUMO2)" evidence="2">
    <location>
        <position position="312"/>
    </location>
</feature>
<feature type="cross-link" description="Glycyl lysine isopeptide (Lys-Gly) (interchain with G-Cter in SUMO2)" evidence="2">
    <location>
        <position position="354"/>
    </location>
</feature>
<feature type="cross-link" description="Glycyl lysine isopeptide (Lys-Gly) (interchain with G-Cter in SUMO2)" evidence="2">
    <location>
        <position position="534"/>
    </location>
</feature>
<sequence>MSRSKGPLSFKDVAVAFSQEEWQQLDPEERTTYRDVMLETYSNLVSVGYDVTKPNMIIKLEQGEEPWTVEGDRHAQRHLEISKVYDPREGIEEIGEKHLQCDDDPYCWRAEKGAAFDEAYTLETALISPSSGAHSCVSCGETLESVSELISSDGSYALEKPSMCFECGKAYGESLEDFNQDEGNSSQHDENILQKVTILEKPFAYECMEALDSESVFMARERAYMGEKPYDWGDSGPDFIQMSDFSTYPRSQMELKPFECTQCGKSFCKKSKFIIHQRAHTGEKPYACSVCGKSFSQKGTLTVHRRSHLEEKPYKCNECGKTFCQKLHLTQHQRTHSGEKPYECSECGKSFCQKTHLTLHQRNHSGERPYPCNECGKSFSRKSALNDHQRTHTGEKLYKCNECGKSYYRKSTLITHQRTHTGEKPYQCSECGKFFSRVSYLTIHYRSHLEEKPYECTECGKTFNLNSAFIRHWKVHAEERVQECGECGKPSPLQCAPDHTGDLGEKRYECNECGKTFLDSSAFHRHQSVPEGEKTYECNICGKSFSDSSCYTVHYRGHSEEKPFGCSECGKTFSHNSSLFRHQRVHTGEKPYECYECGKFFSQKSYLTIHHRIHSGEKPYECSKCGKVFSRMSNLTVHYRSHSGEKPYECNECGKVFSQKSYLTVHYRTHSGEKPYECNECGKKFHHRSAFNSHQRIHKRGTVNVLTVEKL</sequence>
<reference key="1">
    <citation type="journal article" date="2005" name="Science">
        <title>The transcriptional landscape of the mammalian genome.</title>
        <authorList>
            <person name="Carninci P."/>
            <person name="Kasukawa T."/>
            <person name="Katayama S."/>
            <person name="Gough J."/>
            <person name="Frith M.C."/>
            <person name="Maeda N."/>
            <person name="Oyama R."/>
            <person name="Ravasi T."/>
            <person name="Lenhard B."/>
            <person name="Wells C."/>
            <person name="Kodzius R."/>
            <person name="Shimokawa K."/>
            <person name="Bajic V.B."/>
            <person name="Brenner S.E."/>
            <person name="Batalov S."/>
            <person name="Forrest A.R."/>
            <person name="Zavolan M."/>
            <person name="Davis M.J."/>
            <person name="Wilming L.G."/>
            <person name="Aidinis V."/>
            <person name="Allen J.E."/>
            <person name="Ambesi-Impiombato A."/>
            <person name="Apweiler R."/>
            <person name="Aturaliya R.N."/>
            <person name="Bailey T.L."/>
            <person name="Bansal M."/>
            <person name="Baxter L."/>
            <person name="Beisel K.W."/>
            <person name="Bersano T."/>
            <person name="Bono H."/>
            <person name="Chalk A.M."/>
            <person name="Chiu K.P."/>
            <person name="Choudhary V."/>
            <person name="Christoffels A."/>
            <person name="Clutterbuck D.R."/>
            <person name="Crowe M.L."/>
            <person name="Dalla E."/>
            <person name="Dalrymple B.P."/>
            <person name="de Bono B."/>
            <person name="Della Gatta G."/>
            <person name="di Bernardo D."/>
            <person name="Down T."/>
            <person name="Engstrom P."/>
            <person name="Fagiolini M."/>
            <person name="Faulkner G."/>
            <person name="Fletcher C.F."/>
            <person name="Fukushima T."/>
            <person name="Furuno M."/>
            <person name="Futaki S."/>
            <person name="Gariboldi M."/>
            <person name="Georgii-Hemming P."/>
            <person name="Gingeras T.R."/>
            <person name="Gojobori T."/>
            <person name="Green R.E."/>
            <person name="Gustincich S."/>
            <person name="Harbers M."/>
            <person name="Hayashi Y."/>
            <person name="Hensch T.K."/>
            <person name="Hirokawa N."/>
            <person name="Hill D."/>
            <person name="Huminiecki L."/>
            <person name="Iacono M."/>
            <person name="Ikeo K."/>
            <person name="Iwama A."/>
            <person name="Ishikawa T."/>
            <person name="Jakt M."/>
            <person name="Kanapin A."/>
            <person name="Katoh M."/>
            <person name="Kawasawa Y."/>
            <person name="Kelso J."/>
            <person name="Kitamura H."/>
            <person name="Kitano H."/>
            <person name="Kollias G."/>
            <person name="Krishnan S.P."/>
            <person name="Kruger A."/>
            <person name="Kummerfeld S.K."/>
            <person name="Kurochkin I.V."/>
            <person name="Lareau L.F."/>
            <person name="Lazarevic D."/>
            <person name="Lipovich L."/>
            <person name="Liu J."/>
            <person name="Liuni S."/>
            <person name="McWilliam S."/>
            <person name="Madan Babu M."/>
            <person name="Madera M."/>
            <person name="Marchionni L."/>
            <person name="Matsuda H."/>
            <person name="Matsuzawa S."/>
            <person name="Miki H."/>
            <person name="Mignone F."/>
            <person name="Miyake S."/>
            <person name="Morris K."/>
            <person name="Mottagui-Tabar S."/>
            <person name="Mulder N."/>
            <person name="Nakano N."/>
            <person name="Nakauchi H."/>
            <person name="Ng P."/>
            <person name="Nilsson R."/>
            <person name="Nishiguchi S."/>
            <person name="Nishikawa S."/>
            <person name="Nori F."/>
            <person name="Ohara O."/>
            <person name="Okazaki Y."/>
            <person name="Orlando V."/>
            <person name="Pang K.C."/>
            <person name="Pavan W.J."/>
            <person name="Pavesi G."/>
            <person name="Pesole G."/>
            <person name="Petrovsky N."/>
            <person name="Piazza S."/>
            <person name="Reed J."/>
            <person name="Reid J.F."/>
            <person name="Ring B.Z."/>
            <person name="Ringwald M."/>
            <person name="Rost B."/>
            <person name="Ruan Y."/>
            <person name="Salzberg S.L."/>
            <person name="Sandelin A."/>
            <person name="Schneider C."/>
            <person name="Schoenbach C."/>
            <person name="Sekiguchi K."/>
            <person name="Semple C.A."/>
            <person name="Seno S."/>
            <person name="Sessa L."/>
            <person name="Sheng Y."/>
            <person name="Shibata Y."/>
            <person name="Shimada H."/>
            <person name="Shimada K."/>
            <person name="Silva D."/>
            <person name="Sinclair B."/>
            <person name="Sperling S."/>
            <person name="Stupka E."/>
            <person name="Sugiura K."/>
            <person name="Sultana R."/>
            <person name="Takenaka Y."/>
            <person name="Taki K."/>
            <person name="Tammoja K."/>
            <person name="Tan S.L."/>
            <person name="Tang S."/>
            <person name="Taylor M.S."/>
            <person name="Tegner J."/>
            <person name="Teichmann S.A."/>
            <person name="Ueda H.R."/>
            <person name="van Nimwegen E."/>
            <person name="Verardo R."/>
            <person name="Wei C.L."/>
            <person name="Yagi K."/>
            <person name="Yamanishi H."/>
            <person name="Zabarovsky E."/>
            <person name="Zhu S."/>
            <person name="Zimmer A."/>
            <person name="Hide W."/>
            <person name="Bult C."/>
            <person name="Grimmond S.M."/>
            <person name="Teasdale R.D."/>
            <person name="Liu E.T."/>
            <person name="Brusic V."/>
            <person name="Quackenbush J."/>
            <person name="Wahlestedt C."/>
            <person name="Mattick J.S."/>
            <person name="Hume D.A."/>
            <person name="Kai C."/>
            <person name="Sasaki D."/>
            <person name="Tomaru Y."/>
            <person name="Fukuda S."/>
            <person name="Kanamori-Katayama M."/>
            <person name="Suzuki M."/>
            <person name="Aoki J."/>
            <person name="Arakawa T."/>
            <person name="Iida J."/>
            <person name="Imamura K."/>
            <person name="Itoh M."/>
            <person name="Kato T."/>
            <person name="Kawaji H."/>
            <person name="Kawagashira N."/>
            <person name="Kawashima T."/>
            <person name="Kojima M."/>
            <person name="Kondo S."/>
            <person name="Konno H."/>
            <person name="Nakano K."/>
            <person name="Ninomiya N."/>
            <person name="Nishio T."/>
            <person name="Okada M."/>
            <person name="Plessy C."/>
            <person name="Shibata K."/>
            <person name="Shiraki T."/>
            <person name="Suzuki S."/>
            <person name="Tagami M."/>
            <person name="Waki K."/>
            <person name="Watahiki A."/>
            <person name="Okamura-Oho Y."/>
            <person name="Suzuki H."/>
            <person name="Kawai J."/>
            <person name="Hayashizaki Y."/>
        </authorList>
    </citation>
    <scope>NUCLEOTIDE SEQUENCE [LARGE SCALE MRNA]</scope>
    <source>
        <strain>C57BL/6J</strain>
        <tissue>Embryo</tissue>
    </source>
</reference>
<reference key="2">
    <citation type="journal article" date="2004" name="Genome Res.">
        <title>The status, quality, and expansion of the NIH full-length cDNA project: the Mammalian Gene Collection (MGC).</title>
        <authorList>
            <consortium name="The MGC Project Team"/>
        </authorList>
    </citation>
    <scope>NUCLEOTIDE SEQUENCE [LARGE SCALE MRNA]</scope>
    <source>
        <strain>C57BL/6J</strain>
        <tissue>Brain</tissue>
    </source>
</reference>
<reference key="3">
    <citation type="journal article" date="2000" name="J. Biol. Chem.">
        <title>Cloning and characterization of a novel Kruppel-associated box family transcriptional repressor that interacts with the retinoblastoma gene product, RB.</title>
        <authorList>
            <person name="Skapek S.X."/>
            <person name="Jansen D."/>
            <person name="Wei T.-F."/>
            <person name="McDermott T."/>
            <person name="Huang W."/>
            <person name="Olson E.N."/>
            <person name="Lee E.Y.-H.P."/>
        </authorList>
    </citation>
    <scope>NUCLEOTIDE SEQUENCE [MRNA] OF 1-689</scope>
    <scope>INTERACTION WITH RB1</scope>
</reference>
<gene>
    <name type="primary">Rbak</name>
    <name type="synonym">Znf769</name>
</gene>
<organism>
    <name type="scientific">Mus musculus</name>
    <name type="common">Mouse</name>
    <dbReference type="NCBI Taxonomy" id="10090"/>
    <lineage>
        <taxon>Eukaryota</taxon>
        <taxon>Metazoa</taxon>
        <taxon>Chordata</taxon>
        <taxon>Craniata</taxon>
        <taxon>Vertebrata</taxon>
        <taxon>Euteleostomi</taxon>
        <taxon>Mammalia</taxon>
        <taxon>Eutheria</taxon>
        <taxon>Euarchontoglires</taxon>
        <taxon>Glires</taxon>
        <taxon>Rodentia</taxon>
        <taxon>Myomorpha</taxon>
        <taxon>Muroidea</taxon>
        <taxon>Muridae</taxon>
        <taxon>Murinae</taxon>
        <taxon>Mus</taxon>
        <taxon>Mus</taxon>
    </lineage>
</organism>
<dbReference type="EMBL" id="AK051009">
    <property type="protein sequence ID" value="BAC34495.1"/>
    <property type="molecule type" value="mRNA"/>
</dbReference>
<dbReference type="EMBL" id="AF226870">
    <property type="protein sequence ID" value="AAF43390.1"/>
    <property type="molecule type" value="mRNA"/>
</dbReference>
<dbReference type="CCDS" id="CCDS19835.1"/>
<dbReference type="RefSeq" id="NP_001038947.1">
    <property type="nucleotide sequence ID" value="NM_001045482.3"/>
</dbReference>
<dbReference type="RefSeq" id="NP_001346164.1">
    <property type="nucleotide sequence ID" value="NM_001359235.2"/>
</dbReference>
<dbReference type="RefSeq" id="NP_067301.1">
    <property type="nucleotide sequence ID" value="NM_021326.4"/>
</dbReference>
<dbReference type="RefSeq" id="XP_006504787.1">
    <property type="nucleotide sequence ID" value="XM_006504724.3"/>
</dbReference>
<dbReference type="SMR" id="Q8BQC8"/>
<dbReference type="BioGRID" id="208328">
    <property type="interactions" value="25"/>
</dbReference>
<dbReference type="FunCoup" id="Q8BQC8">
    <property type="interactions" value="78"/>
</dbReference>
<dbReference type="STRING" id="10090.ENSMUSP00000128731"/>
<dbReference type="iPTMnet" id="Q8BQC8"/>
<dbReference type="PhosphoSitePlus" id="Q8BQC8"/>
<dbReference type="PaxDb" id="10090-ENSMUSP00000128731"/>
<dbReference type="ProteomicsDB" id="255113"/>
<dbReference type="Antibodypedia" id="11262">
    <property type="antibodies" value="150 antibodies from 27 providers"/>
</dbReference>
<dbReference type="DNASU" id="57782"/>
<dbReference type="Ensembl" id="ENSMUST00000049861.11">
    <property type="protein sequence ID" value="ENSMUSP00000059273.5"/>
    <property type="gene ID" value="ENSMUSG00000061898.11"/>
</dbReference>
<dbReference type="Ensembl" id="ENSMUST00000165318.4">
    <property type="protein sequence ID" value="ENSMUSP00000128731.2"/>
    <property type="gene ID" value="ENSMUSG00000061898.11"/>
</dbReference>
<dbReference type="GeneID" id="57782"/>
<dbReference type="KEGG" id="mmu:57782"/>
<dbReference type="UCSC" id="uc009ajp.2">
    <property type="organism name" value="mouse"/>
</dbReference>
<dbReference type="AGR" id="MGI:1927369"/>
<dbReference type="CTD" id="57786"/>
<dbReference type="MGI" id="MGI:1927369">
    <property type="gene designation" value="Rbak"/>
</dbReference>
<dbReference type="VEuPathDB" id="HostDB:ENSMUSG00000061898"/>
<dbReference type="eggNOG" id="KOG1721">
    <property type="taxonomic scope" value="Eukaryota"/>
</dbReference>
<dbReference type="GeneTree" id="ENSGT00940000154303"/>
<dbReference type="HOGENOM" id="CLU_002678_0_12_1"/>
<dbReference type="InParanoid" id="Q8BQC8"/>
<dbReference type="OMA" id="LENHHRT"/>
<dbReference type="OrthoDB" id="9411774at2759"/>
<dbReference type="PhylomeDB" id="Q8BQC8"/>
<dbReference type="TreeFam" id="TF350803"/>
<dbReference type="BioGRID-ORCS" id="57782">
    <property type="hits" value="1 hit in 77 CRISPR screens"/>
</dbReference>
<dbReference type="PRO" id="PR:Q8BQC8"/>
<dbReference type="Proteomes" id="UP000000589">
    <property type="component" value="Chromosome 5"/>
</dbReference>
<dbReference type="RNAct" id="Q8BQC8">
    <property type="molecule type" value="protein"/>
</dbReference>
<dbReference type="Bgee" id="ENSMUSG00000061898">
    <property type="expression patterns" value="Expressed in metanephric cortical collecting duct and 226 other cell types or tissues"/>
</dbReference>
<dbReference type="GO" id="GO:0005654">
    <property type="term" value="C:nucleoplasm"/>
    <property type="evidence" value="ECO:0007669"/>
    <property type="project" value="Ensembl"/>
</dbReference>
<dbReference type="GO" id="GO:0008270">
    <property type="term" value="F:zinc ion binding"/>
    <property type="evidence" value="ECO:0007669"/>
    <property type="project" value="UniProtKB-KW"/>
</dbReference>
<dbReference type="GO" id="GO:0006355">
    <property type="term" value="P:regulation of DNA-templated transcription"/>
    <property type="evidence" value="ECO:0007669"/>
    <property type="project" value="InterPro"/>
</dbReference>
<dbReference type="CDD" id="cd07765">
    <property type="entry name" value="KRAB_A-box"/>
    <property type="match status" value="1"/>
</dbReference>
<dbReference type="FunFam" id="3.30.160.60:FF:005201">
    <property type="match status" value="1"/>
</dbReference>
<dbReference type="FunFam" id="3.30.160.60:FF:002063">
    <property type="entry name" value="RB associated KRAB zinc finger"/>
    <property type="match status" value="1"/>
</dbReference>
<dbReference type="FunFam" id="3.30.160.60:FF:000012">
    <property type="entry name" value="RB-associated KRAB zinc finger protein-like"/>
    <property type="match status" value="3"/>
</dbReference>
<dbReference type="FunFam" id="3.30.160.60:FF:000666">
    <property type="entry name" value="RB-associated KRAB zinc finger protein-like"/>
    <property type="match status" value="1"/>
</dbReference>
<dbReference type="FunFam" id="3.30.160.60:FF:001354">
    <property type="entry name" value="RB-associated KRAB zinc finger protein-like"/>
    <property type="match status" value="1"/>
</dbReference>
<dbReference type="FunFam" id="3.30.160.60:FF:001430">
    <property type="entry name" value="Uncharacterized protein"/>
    <property type="match status" value="1"/>
</dbReference>
<dbReference type="FunFam" id="3.30.160.60:FF:000001">
    <property type="entry name" value="Zinc finger protein 1 homolog"/>
    <property type="match status" value="1"/>
</dbReference>
<dbReference type="FunFam" id="3.30.160.60:FF:000295">
    <property type="entry name" value="zinc finger protein 19"/>
    <property type="match status" value="1"/>
</dbReference>
<dbReference type="FunFam" id="3.30.160.60:FF:000475">
    <property type="entry name" value="zinc finger protein 32 isoform X1"/>
    <property type="match status" value="1"/>
</dbReference>
<dbReference type="FunFam" id="3.30.160.60:FF:002343">
    <property type="entry name" value="Zinc finger protein 33A"/>
    <property type="match status" value="1"/>
</dbReference>
<dbReference type="FunFam" id="3.30.160.60:FF:000016">
    <property type="entry name" value="zinc finger protein 37 homolog"/>
    <property type="match status" value="1"/>
</dbReference>
<dbReference type="FunFam" id="3.30.160.60:FF:000060">
    <property type="entry name" value="zinc finger protein 436"/>
    <property type="match status" value="1"/>
</dbReference>
<dbReference type="FunFam" id="3.30.160.60:FF:000052">
    <property type="entry name" value="zinc finger protein 546 isoform X1"/>
    <property type="match status" value="1"/>
</dbReference>
<dbReference type="Gene3D" id="6.10.140.140">
    <property type="match status" value="1"/>
</dbReference>
<dbReference type="Gene3D" id="3.30.160.60">
    <property type="entry name" value="Classic Zinc Finger"/>
    <property type="match status" value="15"/>
</dbReference>
<dbReference type="InterPro" id="IPR001909">
    <property type="entry name" value="KRAB"/>
</dbReference>
<dbReference type="InterPro" id="IPR036051">
    <property type="entry name" value="KRAB_dom_sf"/>
</dbReference>
<dbReference type="InterPro" id="IPR036236">
    <property type="entry name" value="Znf_C2H2_sf"/>
</dbReference>
<dbReference type="InterPro" id="IPR013087">
    <property type="entry name" value="Znf_C2H2_type"/>
</dbReference>
<dbReference type="PANTHER" id="PTHR23226:SF416">
    <property type="entry name" value="FI01424P"/>
    <property type="match status" value="1"/>
</dbReference>
<dbReference type="PANTHER" id="PTHR23226">
    <property type="entry name" value="ZINC FINGER AND SCAN DOMAIN-CONTAINING"/>
    <property type="match status" value="1"/>
</dbReference>
<dbReference type="Pfam" id="PF01352">
    <property type="entry name" value="KRAB"/>
    <property type="match status" value="1"/>
</dbReference>
<dbReference type="Pfam" id="PF00096">
    <property type="entry name" value="zf-C2H2"/>
    <property type="match status" value="15"/>
</dbReference>
<dbReference type="SMART" id="SM00349">
    <property type="entry name" value="KRAB"/>
    <property type="match status" value="1"/>
</dbReference>
<dbReference type="SMART" id="SM00355">
    <property type="entry name" value="ZnF_C2H2"/>
    <property type="match status" value="15"/>
</dbReference>
<dbReference type="SUPFAM" id="SSF57667">
    <property type="entry name" value="beta-beta-alpha zinc fingers"/>
    <property type="match status" value="10"/>
</dbReference>
<dbReference type="SUPFAM" id="SSF109640">
    <property type="entry name" value="KRAB domain (Kruppel-associated box)"/>
    <property type="match status" value="1"/>
</dbReference>
<dbReference type="PROSITE" id="PS50805">
    <property type="entry name" value="KRAB"/>
    <property type="match status" value="1"/>
</dbReference>
<dbReference type="PROSITE" id="PS00028">
    <property type="entry name" value="ZINC_FINGER_C2H2_1"/>
    <property type="match status" value="14"/>
</dbReference>
<dbReference type="PROSITE" id="PS50157">
    <property type="entry name" value="ZINC_FINGER_C2H2_2"/>
    <property type="match status" value="15"/>
</dbReference>
<proteinExistence type="evidence at protein level"/>
<comment type="function">
    <text evidence="1">May repress E2F-dependent transcription. May promote AR-dependent transcription.</text>
</comment>
<comment type="subunit">
    <text evidence="1 5">Interacts with AR (By similarity). May also interact with other nuclear hormone receptors such as NR3C1/GR (By similarity). Interacts with RB1.</text>
</comment>
<comment type="subcellular location">
    <subcellularLocation>
        <location evidence="1">Nucleus</location>
    </subcellularLocation>
</comment>
<comment type="similarity">
    <text evidence="6">Belongs to the krueppel C2H2-type zinc-finger protein family.</text>
</comment>
<accession>Q8BQC8</accession>
<accession>Q6PB38</accession>
<accession>Q9JKU4</accession>
<protein>
    <recommendedName>
        <fullName>RB-associated KRAB zinc finger protein</fullName>
    </recommendedName>
    <alternativeName>
        <fullName>RB-associated KRAB repressor</fullName>
    </alternativeName>
    <alternativeName>
        <fullName>Zinc finger protein 769</fullName>
    </alternativeName>
</protein>
<name>RBAK_MOUSE</name>
<evidence type="ECO:0000250" key="1"/>
<evidence type="ECO:0000250" key="2">
    <source>
        <dbReference type="UniProtKB" id="Q9NYW8"/>
    </source>
</evidence>
<evidence type="ECO:0000255" key="3">
    <source>
        <dbReference type="PROSITE-ProRule" id="PRU00042"/>
    </source>
</evidence>
<evidence type="ECO:0000255" key="4">
    <source>
        <dbReference type="PROSITE-ProRule" id="PRU00119"/>
    </source>
</evidence>
<evidence type="ECO:0000269" key="5">
    <source>
    </source>
</evidence>
<evidence type="ECO:0000305" key="6"/>